<gene>
    <name type="primary">hlyB</name>
    <name type="ordered locus">VC_A0220</name>
</gene>
<reference key="1">
    <citation type="journal article" date="1990" name="Mol. Microbiol.">
        <title>Characterization of the hlyB gene and its role in the production of the El Tor haemolysin of Vibrio cholerae O1.</title>
        <authorList>
            <person name="Alm R.A."/>
            <person name="Manning P.A."/>
        </authorList>
    </citation>
    <scope>NUCLEOTIDE SEQUENCE [GENOMIC DNA]</scope>
    <source>
        <strain>El Tor O17 / Serotype O1</strain>
    </source>
</reference>
<reference key="2">
    <citation type="submission" date="1997-06" db="EMBL/GenBank/DDBJ databases">
        <authorList>
            <person name="Manning P.A."/>
        </authorList>
    </citation>
    <scope>SEQUENCE REVISION</scope>
</reference>
<reference key="3">
    <citation type="journal article" date="2000" name="Nature">
        <title>DNA sequence of both chromosomes of the cholera pathogen Vibrio cholerae.</title>
        <authorList>
            <person name="Heidelberg J.F."/>
            <person name="Eisen J.A."/>
            <person name="Nelson W.C."/>
            <person name="Clayton R.A."/>
            <person name="Gwinn M.L."/>
            <person name="Dodson R.J."/>
            <person name="Haft D.H."/>
            <person name="Hickey E.K."/>
            <person name="Peterson J.D."/>
            <person name="Umayam L.A."/>
            <person name="Gill S.R."/>
            <person name="Nelson K.E."/>
            <person name="Read T.D."/>
            <person name="Tettelin H."/>
            <person name="Richardson D.L."/>
            <person name="Ermolaeva M.D."/>
            <person name="Vamathevan J.J."/>
            <person name="Bass S."/>
            <person name="Qin H."/>
            <person name="Dragoi I."/>
            <person name="Sellers P."/>
            <person name="McDonald L.A."/>
            <person name="Utterback T.R."/>
            <person name="Fleischmann R.D."/>
            <person name="Nierman W.C."/>
            <person name="White O."/>
            <person name="Salzberg S.L."/>
            <person name="Smith H.O."/>
            <person name="Colwell R.R."/>
            <person name="Mekalanos J.J."/>
            <person name="Venter J.C."/>
            <person name="Fraser C.M."/>
        </authorList>
    </citation>
    <scope>NUCLEOTIDE SEQUENCE [LARGE SCALE GENOMIC DNA]</scope>
    <source>
        <strain>ATCC 39315 / El Tor Inaba N16961</strain>
    </source>
</reference>
<reference key="4">
    <citation type="journal article" date="1993" name="Protein Sci.">
        <title>Vibrio cholerae hlyB is a member of the chemotaxis receptor gene family.</title>
        <authorList>
            <person name="Jeffery C.J."/>
            <person name="Koshland D.E. Jr."/>
        </authorList>
    </citation>
    <scope>IDENTIFICATION AS A MEMBER OF THE CHEMOTAXIS RECEPTOR FAMILY</scope>
</reference>
<name>HLYB_VIBCH</name>
<sequence length="548" mass="60035">MIINKFSLKWMLAIAVAIPAIALLFVAFTSLNTMSVMQAQSNSLYANTAAPMRAMAEATSRIPRMRVGIDMMLLQETALKDAKGVLKRVEEARTEDIPEMRQAMQVAVDSQVNPELKEQARKLQARFEQMVREELEPMLQAFANNDMTTAQNIYRDKYAPTYGEMRKQANQILDTLLQQAEQQNHASVESFEAGRTKQMVIIAAGLIISFITSLVIITNLRSRVAYLKDRMSSAAANLSLRTRLELDGNDELCDIGKSFNAFIDKVHHSIEEVAENSKELATMASSVSQRAHMTQSNCASQRDRTVQVATAIHELGATVSEIASNAAMAADVAKQATLHSGEGKKVVGEVQNRIQTLVNELDNATQVVSSLATQINGISSTLDTIRSISEQTNLLALNAAIEAARAGEQGRGFAVVADEVRTLASRSAASTEEIQQVINRLQTESTRAVEAMEKGRSQSDVVVEFSAKANQSLTEINSQIDQINDQNIQVATATEEQSTVVEDINRNVEDINQLTTETSHVADELSRASASLQRLSSQLDKLVGSFEL</sequence>
<evidence type="ECO:0000250" key="1"/>
<evidence type="ECO:0000255" key="2"/>
<evidence type="ECO:0000255" key="3">
    <source>
        <dbReference type="PROSITE-ProRule" id="PRU00102"/>
    </source>
</evidence>
<evidence type="ECO:0000255" key="4">
    <source>
        <dbReference type="PROSITE-ProRule" id="PRU00284"/>
    </source>
</evidence>
<evidence type="ECO:0000305" key="5"/>
<evidence type="ECO:0000305" key="6">
    <source>
    </source>
</evidence>
<organism>
    <name type="scientific">Vibrio cholerae serotype O1 (strain ATCC 39315 / El Tor Inaba N16961)</name>
    <dbReference type="NCBI Taxonomy" id="243277"/>
    <lineage>
        <taxon>Bacteria</taxon>
        <taxon>Pseudomonadati</taxon>
        <taxon>Pseudomonadota</taxon>
        <taxon>Gammaproteobacteria</taxon>
        <taxon>Vibrionales</taxon>
        <taxon>Vibrionaceae</taxon>
        <taxon>Vibrio</taxon>
    </lineage>
</organism>
<feature type="chain" id="PRO_0000013359" description="Methyl-accepting chemotaxis protein HlyB">
    <location>
        <begin position="1"/>
        <end position="548"/>
    </location>
</feature>
<feature type="topological domain" description="Cytoplasmic" evidence="2">
    <location>
        <begin position="1"/>
        <end position="10"/>
    </location>
</feature>
<feature type="transmembrane region" description="Helical" evidence="2">
    <location>
        <begin position="11"/>
        <end position="31"/>
    </location>
</feature>
<feature type="topological domain" description="Periplasmic" evidence="2">
    <location>
        <begin position="32"/>
        <end position="199"/>
    </location>
</feature>
<feature type="transmembrane region" description="Helical" evidence="2">
    <location>
        <begin position="200"/>
        <end position="220"/>
    </location>
</feature>
<feature type="topological domain" description="Cytoplasmic" evidence="2">
    <location>
        <begin position="221"/>
        <end position="548"/>
    </location>
</feature>
<feature type="domain" description="HAMP" evidence="3">
    <location>
        <begin position="218"/>
        <end position="271"/>
    </location>
</feature>
<feature type="domain" description="Methyl-accepting transducer" evidence="4">
    <location>
        <begin position="276"/>
        <end position="512"/>
    </location>
</feature>
<feature type="sequence conflict" description="In Ref. 1; CAA68638." evidence="5" ref="1">
    <original>A</original>
    <variation>R</variation>
    <location>
        <position position="22"/>
    </location>
</feature>
<feature type="sequence conflict" description="In Ref. 1; CAA68638." evidence="5" ref="1">
    <original>A</original>
    <variation>R</variation>
    <location>
        <position position="103"/>
    </location>
</feature>
<feature type="sequence conflict" description="In Ref. 1; CAA68638." evidence="5" ref="1">
    <original>EQ</original>
    <variation>DR</variation>
    <location>
        <begin position="181"/>
        <end position="182"/>
    </location>
</feature>
<feature type="sequence conflict" description="In Ref. 1; CAA68638." evidence="5" ref="1">
    <original>A</original>
    <variation>R</variation>
    <location>
        <position position="330"/>
    </location>
</feature>
<feature type="sequence conflict" description="In Ref. 1; CAA68638." evidence="5" ref="1">
    <original>KQ</original>
    <variation>NE</variation>
    <location>
        <begin position="334"/>
        <end position="335"/>
    </location>
</feature>
<dbReference type="EMBL" id="Y00557">
    <property type="protein sequence ID" value="CAA68638.1"/>
    <property type="molecule type" value="Genomic_DNA"/>
</dbReference>
<dbReference type="EMBL" id="AE003853">
    <property type="protein sequence ID" value="AAF96132.1"/>
    <property type="molecule type" value="Genomic_DNA"/>
</dbReference>
<dbReference type="PIR" id="B82486">
    <property type="entry name" value="B82486"/>
</dbReference>
<dbReference type="PIR" id="S15910">
    <property type="entry name" value="S15910"/>
</dbReference>
<dbReference type="RefSeq" id="NP_232619.1">
    <property type="nucleotide sequence ID" value="NC_002506.1"/>
</dbReference>
<dbReference type="RefSeq" id="WP_000586206.1">
    <property type="nucleotide sequence ID" value="NZ_LT906615.1"/>
</dbReference>
<dbReference type="SMR" id="P15492"/>
<dbReference type="STRING" id="243277.VC_A0220"/>
<dbReference type="DNASU" id="2612596"/>
<dbReference type="EnsemblBacteria" id="AAF96132">
    <property type="protein sequence ID" value="AAF96132"/>
    <property type="gene ID" value="VC_A0220"/>
</dbReference>
<dbReference type="KEGG" id="vch:VC_A0220"/>
<dbReference type="PATRIC" id="fig|243277.26.peg.2853"/>
<dbReference type="eggNOG" id="COG0840">
    <property type="taxonomic scope" value="Bacteria"/>
</dbReference>
<dbReference type="HOGENOM" id="CLU_000445_107_27_6"/>
<dbReference type="Proteomes" id="UP000000584">
    <property type="component" value="Chromosome 2"/>
</dbReference>
<dbReference type="GO" id="GO:0005886">
    <property type="term" value="C:plasma membrane"/>
    <property type="evidence" value="ECO:0007669"/>
    <property type="project" value="UniProtKB-SubCell"/>
</dbReference>
<dbReference type="GO" id="GO:0004888">
    <property type="term" value="F:transmembrane signaling receptor activity"/>
    <property type="evidence" value="ECO:0007669"/>
    <property type="project" value="InterPro"/>
</dbReference>
<dbReference type="GO" id="GO:0006935">
    <property type="term" value="P:chemotaxis"/>
    <property type="evidence" value="ECO:0000318"/>
    <property type="project" value="GO_Central"/>
</dbReference>
<dbReference type="GO" id="GO:0007165">
    <property type="term" value="P:signal transduction"/>
    <property type="evidence" value="ECO:0007669"/>
    <property type="project" value="UniProtKB-KW"/>
</dbReference>
<dbReference type="CDD" id="cd11386">
    <property type="entry name" value="MCP_signal"/>
    <property type="match status" value="1"/>
</dbReference>
<dbReference type="FunFam" id="1.10.287.950:FF:000001">
    <property type="entry name" value="Methyl-accepting chemotaxis sensory transducer"/>
    <property type="match status" value="1"/>
</dbReference>
<dbReference type="Gene3D" id="1.10.287.950">
    <property type="entry name" value="Methyl-accepting chemotaxis protein"/>
    <property type="match status" value="1"/>
</dbReference>
<dbReference type="InterPro" id="IPR004090">
    <property type="entry name" value="Chemotax_Me-accpt_rcpt"/>
</dbReference>
<dbReference type="InterPro" id="IPR003660">
    <property type="entry name" value="HAMP_dom"/>
</dbReference>
<dbReference type="InterPro" id="IPR024478">
    <property type="entry name" value="HlyB_4HB_MCP"/>
</dbReference>
<dbReference type="InterPro" id="IPR004089">
    <property type="entry name" value="MCPsignal_dom"/>
</dbReference>
<dbReference type="InterPro" id="IPR000727">
    <property type="entry name" value="T_SNARE_dom"/>
</dbReference>
<dbReference type="PANTHER" id="PTHR32089:SF39">
    <property type="entry name" value="METHYL-ACCEPTING CHEMOTAXIS PROTEIN HLYB"/>
    <property type="match status" value="1"/>
</dbReference>
<dbReference type="PANTHER" id="PTHR32089">
    <property type="entry name" value="METHYL-ACCEPTING CHEMOTAXIS PROTEIN MCPB"/>
    <property type="match status" value="1"/>
</dbReference>
<dbReference type="Pfam" id="PF12729">
    <property type="entry name" value="4HB_MCP_1"/>
    <property type="match status" value="1"/>
</dbReference>
<dbReference type="Pfam" id="PF00672">
    <property type="entry name" value="HAMP"/>
    <property type="match status" value="1"/>
</dbReference>
<dbReference type="Pfam" id="PF00015">
    <property type="entry name" value="MCPsignal"/>
    <property type="match status" value="1"/>
</dbReference>
<dbReference type="PRINTS" id="PR00260">
    <property type="entry name" value="CHEMTRNSDUCR"/>
</dbReference>
<dbReference type="SMART" id="SM00304">
    <property type="entry name" value="HAMP"/>
    <property type="match status" value="1"/>
</dbReference>
<dbReference type="SMART" id="SM00283">
    <property type="entry name" value="MA"/>
    <property type="match status" value="1"/>
</dbReference>
<dbReference type="SUPFAM" id="SSF58104">
    <property type="entry name" value="Methyl-accepting chemotaxis protein (MCP) signaling domain"/>
    <property type="match status" value="1"/>
</dbReference>
<dbReference type="PROSITE" id="PS50111">
    <property type="entry name" value="CHEMOTAXIS_TRANSDUC_2"/>
    <property type="match status" value="1"/>
</dbReference>
<dbReference type="PROSITE" id="PS50885">
    <property type="entry name" value="HAMP"/>
    <property type="match status" value="1"/>
</dbReference>
<proteinExistence type="inferred from homology"/>
<accession>P15492</accession>
<accession>Q9KMU8</accession>
<comment type="function">
    <text evidence="1">Chemotactic-signal transducers respond to changes in the concentration of attractants and repellents in the environment, transduce a signal from the outside to the inside of the cell, and facilitate sensory adaptation through the variation of the level of methylation.</text>
</comment>
<comment type="subcellular location">
    <subcellularLocation>
        <location evidence="5">Cell inner membrane</location>
        <topology evidence="5">Multi-pass membrane protein</topology>
    </subcellularLocation>
</comment>
<comment type="similarity">
    <text evidence="5">Belongs to the methyl-accepting chemotaxis (MCP) protein family.</text>
</comment>
<comment type="caution">
    <text evidence="6">Was originally thought to be a pore or transmembrane transporter for hemolysin.</text>
</comment>
<protein>
    <recommendedName>
        <fullName>Methyl-accepting chemotaxis protein HlyB</fullName>
    </recommendedName>
</protein>
<keyword id="KW-0997">Cell inner membrane</keyword>
<keyword id="KW-1003">Cell membrane</keyword>
<keyword id="KW-0145">Chemotaxis</keyword>
<keyword id="KW-0472">Membrane</keyword>
<keyword id="KW-0488">Methylation</keyword>
<keyword id="KW-1185">Reference proteome</keyword>
<keyword id="KW-0807">Transducer</keyword>
<keyword id="KW-0812">Transmembrane</keyword>
<keyword id="KW-1133">Transmembrane helix</keyword>